<evidence type="ECO:0000255" key="1">
    <source>
        <dbReference type="HAMAP-Rule" id="MF_00374"/>
    </source>
</evidence>
<evidence type="ECO:0000305" key="2"/>
<name>RL29_COXBN</name>
<dbReference type="EMBL" id="CP000733">
    <property type="protein sequence ID" value="ABS76482.1"/>
    <property type="molecule type" value="Genomic_DNA"/>
</dbReference>
<dbReference type="RefSeq" id="WP_005771530.1">
    <property type="nucleotide sequence ID" value="NC_009727.1"/>
</dbReference>
<dbReference type="SMR" id="A9KD23"/>
<dbReference type="KEGG" id="cbd:CBUD_1846"/>
<dbReference type="HOGENOM" id="CLU_158491_1_2_6"/>
<dbReference type="Proteomes" id="UP000008555">
    <property type="component" value="Chromosome"/>
</dbReference>
<dbReference type="GO" id="GO:0022625">
    <property type="term" value="C:cytosolic large ribosomal subunit"/>
    <property type="evidence" value="ECO:0007669"/>
    <property type="project" value="TreeGrafter"/>
</dbReference>
<dbReference type="GO" id="GO:0003735">
    <property type="term" value="F:structural constituent of ribosome"/>
    <property type="evidence" value="ECO:0007669"/>
    <property type="project" value="InterPro"/>
</dbReference>
<dbReference type="GO" id="GO:0006412">
    <property type="term" value="P:translation"/>
    <property type="evidence" value="ECO:0007669"/>
    <property type="project" value="UniProtKB-UniRule"/>
</dbReference>
<dbReference type="CDD" id="cd00427">
    <property type="entry name" value="Ribosomal_L29_HIP"/>
    <property type="match status" value="1"/>
</dbReference>
<dbReference type="FunFam" id="1.10.287.310:FF:000001">
    <property type="entry name" value="50S ribosomal protein L29"/>
    <property type="match status" value="1"/>
</dbReference>
<dbReference type="Gene3D" id="1.10.287.310">
    <property type="match status" value="1"/>
</dbReference>
<dbReference type="HAMAP" id="MF_00374">
    <property type="entry name" value="Ribosomal_uL29"/>
    <property type="match status" value="1"/>
</dbReference>
<dbReference type="InterPro" id="IPR050063">
    <property type="entry name" value="Ribosomal_protein_uL29"/>
</dbReference>
<dbReference type="InterPro" id="IPR001854">
    <property type="entry name" value="Ribosomal_uL29"/>
</dbReference>
<dbReference type="InterPro" id="IPR036049">
    <property type="entry name" value="Ribosomal_uL29_sf"/>
</dbReference>
<dbReference type="NCBIfam" id="TIGR00012">
    <property type="entry name" value="L29"/>
    <property type="match status" value="1"/>
</dbReference>
<dbReference type="PANTHER" id="PTHR10916">
    <property type="entry name" value="60S RIBOSOMAL PROTEIN L35/50S RIBOSOMAL PROTEIN L29"/>
    <property type="match status" value="1"/>
</dbReference>
<dbReference type="PANTHER" id="PTHR10916:SF0">
    <property type="entry name" value="LARGE RIBOSOMAL SUBUNIT PROTEIN UL29C"/>
    <property type="match status" value="1"/>
</dbReference>
<dbReference type="Pfam" id="PF00831">
    <property type="entry name" value="Ribosomal_L29"/>
    <property type="match status" value="1"/>
</dbReference>
<dbReference type="SUPFAM" id="SSF46561">
    <property type="entry name" value="Ribosomal protein L29 (L29p)"/>
    <property type="match status" value="1"/>
</dbReference>
<keyword id="KW-0687">Ribonucleoprotein</keyword>
<keyword id="KW-0689">Ribosomal protein</keyword>
<accession>A9KD23</accession>
<organism>
    <name type="scientific">Coxiella burnetii (strain Dugway 5J108-111)</name>
    <dbReference type="NCBI Taxonomy" id="434922"/>
    <lineage>
        <taxon>Bacteria</taxon>
        <taxon>Pseudomonadati</taxon>
        <taxon>Pseudomonadota</taxon>
        <taxon>Gammaproteobacteria</taxon>
        <taxon>Legionellales</taxon>
        <taxon>Coxiellaceae</taxon>
        <taxon>Coxiella</taxon>
    </lineage>
</organism>
<sequence>MNVNDLRNKTKAELKKELLELLKEQFNLRMQKGGGEAPRPHLFKRVRRDIARVKTLLGEKERNNE</sequence>
<proteinExistence type="inferred from homology"/>
<feature type="chain" id="PRO_1000079881" description="Large ribosomal subunit protein uL29">
    <location>
        <begin position="1"/>
        <end position="65"/>
    </location>
</feature>
<comment type="similarity">
    <text evidence="1">Belongs to the universal ribosomal protein uL29 family.</text>
</comment>
<protein>
    <recommendedName>
        <fullName evidence="1">Large ribosomal subunit protein uL29</fullName>
    </recommendedName>
    <alternativeName>
        <fullName evidence="2">50S ribosomal protein L29</fullName>
    </alternativeName>
</protein>
<reference key="1">
    <citation type="journal article" date="2009" name="Infect. Immun.">
        <title>Comparative genomics reveal extensive transposon-mediated genomic plasticity and diversity among potential effector proteins within the genus Coxiella.</title>
        <authorList>
            <person name="Beare P.A."/>
            <person name="Unsworth N."/>
            <person name="Andoh M."/>
            <person name="Voth D.E."/>
            <person name="Omsland A."/>
            <person name="Gilk S.D."/>
            <person name="Williams K.P."/>
            <person name="Sobral B.W."/>
            <person name="Kupko J.J. III"/>
            <person name="Porcella S.F."/>
            <person name="Samuel J.E."/>
            <person name="Heinzen R.A."/>
        </authorList>
    </citation>
    <scope>NUCLEOTIDE SEQUENCE [LARGE SCALE GENOMIC DNA]</scope>
    <source>
        <strain>Dugway 5J108-111</strain>
    </source>
</reference>
<gene>
    <name evidence="1" type="primary">rpmC</name>
    <name type="ordered locus">CBUD_1846</name>
</gene>